<gene>
    <name type="primary">ihfB</name>
    <name type="synonym">himD</name>
    <name evidence="5" type="synonym">hip</name>
    <name type="ordered locus">b0912</name>
    <name type="ordered locus">JW0895</name>
</gene>
<proteinExistence type="evidence at protein level"/>
<feature type="chain" id="PRO_0000105048" description="Integration host factor subunit beta">
    <location>
        <begin position="1"/>
        <end position="94"/>
    </location>
</feature>
<feature type="mutagenesis site" description="Altered DNA-binding specificity." evidence="1">
    <original>E</original>
    <variation>G</variation>
    <variation>K</variation>
    <variation>V</variation>
    <location>
        <position position="44"/>
    </location>
</feature>
<feature type="sequence conflict" description="In Ref. 6; AA sequence." evidence="6" ref="6">
    <original>R</original>
    <variation>S</variation>
    <location>
        <position position="9"/>
    </location>
</feature>
<feature type="helix" evidence="7">
    <location>
        <begin position="3"/>
        <end position="13"/>
    </location>
</feature>
<feature type="strand" evidence="8">
    <location>
        <begin position="15"/>
        <end position="17"/>
    </location>
</feature>
<feature type="helix" evidence="7">
    <location>
        <begin position="19"/>
        <end position="38"/>
    </location>
</feature>
<feature type="strand" evidence="7">
    <location>
        <begin position="43"/>
        <end position="45"/>
    </location>
</feature>
<feature type="turn" evidence="7">
    <location>
        <begin position="46"/>
        <end position="48"/>
    </location>
</feature>
<feature type="strand" evidence="7">
    <location>
        <begin position="49"/>
        <end position="56"/>
    </location>
</feature>
<feature type="strand" evidence="7">
    <location>
        <begin position="59"/>
        <end position="62"/>
    </location>
</feature>
<feature type="turn" evidence="7">
    <location>
        <begin position="64"/>
        <end position="66"/>
    </location>
</feature>
<feature type="strand" evidence="7">
    <location>
        <begin position="69"/>
        <end position="72"/>
    </location>
</feature>
<feature type="strand" evidence="7">
    <location>
        <begin position="75"/>
        <end position="82"/>
    </location>
</feature>
<feature type="helix" evidence="7">
    <location>
        <begin position="84"/>
        <end position="90"/>
    </location>
</feature>
<accession>P0A6Y1</accession>
<accession>P08756</accession>
<evidence type="ECO:0000269" key="1">
    <source>
    </source>
</evidence>
<evidence type="ECO:0000269" key="2">
    <source>
    </source>
</evidence>
<evidence type="ECO:0000269" key="3">
    <source>
    </source>
</evidence>
<evidence type="ECO:0000269" key="4">
    <source>
    </source>
</evidence>
<evidence type="ECO:0000303" key="5">
    <source>
    </source>
</evidence>
<evidence type="ECO:0000305" key="6"/>
<evidence type="ECO:0007829" key="7">
    <source>
        <dbReference type="PDB" id="1OWF"/>
    </source>
</evidence>
<evidence type="ECO:0007829" key="8">
    <source>
        <dbReference type="PDB" id="1OWG"/>
    </source>
</evidence>
<name>IHFB_ECOLI</name>
<sequence length="94" mass="10651">MTKSELIERLATQQSHIPAKTVEDAVKEMLEHMASTLAQGERIEIRGFGSFSLHYRAPRTGRNPKTGDKVELEGKYVPHFKPGKELRDRANIYG</sequence>
<comment type="function">
    <text evidence="3">One of the 2 subunits of integration host factor (IHF), a specific DNA-binding protein that functions in genetic recombination as well as in transcriptional and translational control. IHF in combination with the datA locus promotes ATP hydrolysis of ATP-DnaA, called DDAH (datA-dependent DnaA-ATP hydrolysis) (PubMed:23277577). IHF binds oriC as replication initiates, dissociates within minutes and slowly reassociates during the cell cyle; IHF binding to datA is low before initiation, rises after initiation and dissociates during the cell cycle, allowing IHF to coordinate replication initiation (PubMed:23277577).</text>
</comment>
<comment type="function">
    <text>Plays a crucial role in the lysogenic life cycle of bacteriophage lambda, as it is required not only in the recombination reaction, which inserts lambda DNA into the E.coli chromosome, but also for the synthesis of int and cI repressor, two phage proteins necessary for DNA insertion and repression, respectively. The synthesis of int and cI proteins is regulated indirectly by IHF via translational control of the lambda cII protein.</text>
</comment>
<comment type="function">
    <text>Has an essential role in conjugative DNA transfer (CDT), the unidirectional transfer of ssDNA plasmid from a donor to a recipient cell. It is the central mechanism by which antibiotic resistance and virulence factors are propagated in bacterial populations. Part of the relaxosome, which facilitates a site- and strand-specific cut in the origin of transfer by TraI, at the nic site. Relaxosome formation requires binding of IHF and TraY to the oriT region, which then facilitates binding of TraI.</text>
</comment>
<comment type="subunit">
    <text evidence="2 4">Heterodimer of an alpha and a beta chain. Part of the relaxosome, a complex composed of plasmid-encoded TraI, TraM, TraY and host-encoded IHF bound to the F plasmid origin of transfer (oriT).</text>
</comment>
<comment type="subcellular location">
    <subcellularLocation>
        <location>Cytoplasm</location>
    </subcellularLocation>
</comment>
<comment type="disruption phenotype">
    <text evidence="3">Increased in vivo levels of ATP-DnaA.</text>
</comment>
<comment type="similarity">
    <text evidence="6">Belongs to the bacterial histone-like protein family.</text>
</comment>
<protein>
    <recommendedName>
        <fullName>Integration host factor subunit beta</fullName>
        <shortName>IHF-beta</shortName>
    </recommendedName>
</protein>
<keyword id="KW-0002">3D-structure</keyword>
<keyword id="KW-0184">Conjugation</keyword>
<keyword id="KW-0963">Cytoplasm</keyword>
<keyword id="KW-0903">Direct protein sequencing</keyword>
<keyword id="KW-0233">DNA recombination</keyword>
<keyword id="KW-0235">DNA replication</keyword>
<keyword id="KW-0238">DNA-binding</keyword>
<keyword id="KW-1185">Reference proteome</keyword>
<keyword id="KW-0804">Transcription</keyword>
<keyword id="KW-0805">Transcription regulation</keyword>
<keyword id="KW-0810">Translation regulation</keyword>
<reference key="1">
    <citation type="journal article" date="1985" name="J. Mol. Biol.">
        <title>Primary structure of the hip gene of Escherichia coli and of its product, the beta subunit of integration host factor.</title>
        <authorList>
            <person name="Flamm E."/>
            <person name="Weisberg R.A."/>
        </authorList>
    </citation>
    <scope>NUCLEOTIDE SEQUENCE [GENOMIC DNA]</scope>
    <source>
        <strain>K12</strain>
    </source>
</reference>
<reference key="2">
    <citation type="journal article" date="1991" name="J. Bacteriol.">
        <title>Genes coding for integration host factor are conserved in Gram-negative bacteria.</title>
        <authorList>
            <person name="Haluzi H."/>
            <person name="Goitein D."/>
            <person name="Koby S."/>
            <person name="Mendelson I."/>
            <person name="Teff D."/>
            <person name="Mengeritsky G."/>
            <person name="Giladi H."/>
            <person name="Oppenheim A.B."/>
        </authorList>
    </citation>
    <scope>SEQUENCE REVISION TO 90</scope>
</reference>
<reference key="3">
    <citation type="journal article" date="1996" name="DNA Res.">
        <title>A 718-kb DNA sequence of the Escherichia coli K-12 genome corresponding to the 12.7-28.0 min region on the linkage map.</title>
        <authorList>
            <person name="Oshima T."/>
            <person name="Aiba H."/>
            <person name="Baba T."/>
            <person name="Fujita K."/>
            <person name="Hayashi K."/>
            <person name="Honjo A."/>
            <person name="Ikemoto K."/>
            <person name="Inada T."/>
            <person name="Itoh T."/>
            <person name="Kajihara M."/>
            <person name="Kanai K."/>
            <person name="Kashimoto K."/>
            <person name="Kimura S."/>
            <person name="Kitagawa M."/>
            <person name="Makino K."/>
            <person name="Masuda S."/>
            <person name="Miki T."/>
            <person name="Mizobuchi K."/>
            <person name="Mori H."/>
            <person name="Motomura K."/>
            <person name="Nakamura Y."/>
            <person name="Nashimoto H."/>
            <person name="Nishio Y."/>
            <person name="Saito N."/>
            <person name="Sampei G."/>
            <person name="Seki Y."/>
            <person name="Tagami H."/>
            <person name="Takemoto K."/>
            <person name="Wada C."/>
            <person name="Yamamoto Y."/>
            <person name="Yano M."/>
            <person name="Horiuchi T."/>
        </authorList>
    </citation>
    <scope>NUCLEOTIDE SEQUENCE [LARGE SCALE GENOMIC DNA]</scope>
    <source>
        <strain>K12 / W3110 / ATCC 27325 / DSM 5911</strain>
    </source>
</reference>
<reference key="4">
    <citation type="journal article" date="1997" name="Science">
        <title>The complete genome sequence of Escherichia coli K-12.</title>
        <authorList>
            <person name="Blattner F.R."/>
            <person name="Plunkett G. III"/>
            <person name="Bloch C.A."/>
            <person name="Perna N.T."/>
            <person name="Burland V."/>
            <person name="Riley M."/>
            <person name="Collado-Vides J."/>
            <person name="Glasner J.D."/>
            <person name="Rode C.K."/>
            <person name="Mayhew G.F."/>
            <person name="Gregor J."/>
            <person name="Davis N.W."/>
            <person name="Kirkpatrick H.A."/>
            <person name="Goeden M.A."/>
            <person name="Rose D.J."/>
            <person name="Mau B."/>
            <person name="Shao Y."/>
        </authorList>
    </citation>
    <scope>NUCLEOTIDE SEQUENCE [LARGE SCALE GENOMIC DNA]</scope>
    <source>
        <strain>K12 / MG1655 / ATCC 47076</strain>
    </source>
</reference>
<reference key="5">
    <citation type="journal article" date="2006" name="Mol. Syst. Biol.">
        <title>Highly accurate genome sequences of Escherichia coli K-12 strains MG1655 and W3110.</title>
        <authorList>
            <person name="Hayashi K."/>
            <person name="Morooka N."/>
            <person name="Yamamoto Y."/>
            <person name="Fujita K."/>
            <person name="Isono K."/>
            <person name="Choi S."/>
            <person name="Ohtsubo E."/>
            <person name="Baba T."/>
            <person name="Wanner B.L."/>
            <person name="Mori H."/>
            <person name="Horiuchi T."/>
        </authorList>
    </citation>
    <scope>NUCLEOTIDE SEQUENCE [LARGE SCALE GENOMIC DNA]</scope>
    <source>
        <strain>K12 / W3110 / ATCC 27325 / DSM 5911</strain>
    </source>
</reference>
<reference key="6">
    <citation type="journal article" date="1998" name="FEMS Microbiol. Lett.">
        <title>Small genes/gene-products in Escherichia coli K-12.</title>
        <authorList>
            <person name="Wasinger V.C."/>
            <person name="Humphery-Smith I."/>
        </authorList>
    </citation>
    <scope>PROTEIN SEQUENCE OF 1-10</scope>
    <source>
        <strain>K12</strain>
    </source>
</reference>
<reference key="7">
    <citation type="journal article" date="1992" name="EMBO J.">
        <title>The isolation and characterization of mutants of the integration host factor (IHF) of Escherichia coli with altered, expanded DNA-binding specificities.</title>
        <authorList>
            <person name="Lee E.C."/>
            <person name="Hales L.M."/>
            <person name="Gumport R.I."/>
            <person name="Gardner J.F."/>
        </authorList>
    </citation>
    <scope>MUTAGENESIS OF GLU-44</scope>
</reference>
<reference key="8">
    <citation type="journal article" date="1995" name="J. Biol. Chem.">
        <title>The traY gene product and integration host factor stimulate Escherichia coli DNA helicase I-catalyzed nicking at the F plasmid oriT.</title>
        <authorList>
            <person name="Nelson W.C."/>
            <person name="Howard M.T."/>
            <person name="Sherman J.A."/>
            <person name="Matson S.W."/>
        </authorList>
    </citation>
    <scope>FUNCTION IN CONJUGATION</scope>
    <scope>FUNCTION IN F PLASMID NICKING</scope>
</reference>
<reference key="9">
    <citation type="journal article" date="1995" name="J. Biol. Chem.">
        <title>Stepwise assembly of a relaxosome at the F plasmid origin of transfer.</title>
        <authorList>
            <person name="Howard M.T."/>
            <person name="Nelson W.C."/>
            <person name="Matson S.W."/>
        </authorList>
    </citation>
    <scope>CHARACTERIZATION OF RELAXOSOME ASSEMBLY ORDER</scope>
    <scope>SUBUNIT</scope>
</reference>
<reference key="10">
    <citation type="journal article" date="2007" name="Mol. Microbiol.">
        <title>The F plasmid-encoded TraM protein stimulates relaxosome-mediated cleavage at oriT through an interaction with TraI.</title>
        <authorList>
            <person name="Ragonese H."/>
            <person name="Haisch D."/>
            <person name="Villareal E."/>
            <person name="Choi J.H."/>
            <person name="Matson S.W."/>
        </authorList>
    </citation>
    <scope>FUNCTION IN CONJUGATION</scope>
    <scope>DNA-BINDING</scope>
    <scope>SUBUNIT</scope>
</reference>
<reference key="11">
    <citation type="journal article" date="2013" name="Proc. Natl. Acad. Sci. U.S.A.">
        <title>DnaA binding locus datA promotes DnaA-ATP hydrolysis to enable cell cycle-coordinated replication initiation.</title>
        <authorList>
            <person name="Kasho K."/>
            <person name="Katayama T."/>
        </authorList>
    </citation>
    <scope>FUNCTION IN REPLICATION INITIATION</scope>
    <scope>DISRUPTION PHENOTYPE</scope>
    <scope>DNA-BINDING</scope>
    <source>
        <strain>K12 / MG1655 / ATCC 47076</strain>
    </source>
</reference>
<reference key="12">
    <citation type="journal article" date="1996" name="Cell">
        <title>Crystal structure of an IHF-DNA complex: a protein-induced DNA U-turn.</title>
        <authorList>
            <person name="Rice P.A."/>
            <person name="Yang S."/>
            <person name="Mizuuchi K."/>
            <person name="Nash H.A."/>
        </authorList>
    </citation>
    <scope>X-RAY CRYSTALLOGRAPHY (2.5 ANGSTROMS)</scope>
</reference>
<dbReference type="EMBL" id="X04864">
    <property type="protein sequence ID" value="CAA28557.1"/>
    <property type="molecule type" value="Genomic_DNA"/>
</dbReference>
<dbReference type="EMBL" id="U00096">
    <property type="protein sequence ID" value="AAC73998.1"/>
    <property type="molecule type" value="Genomic_DNA"/>
</dbReference>
<dbReference type="EMBL" id="AP009048">
    <property type="protein sequence ID" value="BAA35656.1"/>
    <property type="molecule type" value="Genomic_DNA"/>
</dbReference>
<dbReference type="PIR" id="G64830">
    <property type="entry name" value="IQECAB"/>
</dbReference>
<dbReference type="RefSeq" id="NP_415432.1">
    <property type="nucleotide sequence ID" value="NC_000913.3"/>
</dbReference>
<dbReference type="RefSeq" id="WP_000167336.1">
    <property type="nucleotide sequence ID" value="NZ_STEB01000006.1"/>
</dbReference>
<dbReference type="PDB" id="1IHF">
    <property type="method" value="X-ray"/>
    <property type="resolution" value="2.20 A"/>
    <property type="chains" value="B=1-94"/>
</dbReference>
<dbReference type="PDB" id="1OUZ">
    <property type="method" value="X-ray"/>
    <property type="resolution" value="2.41 A"/>
    <property type="chains" value="B=1-94"/>
</dbReference>
<dbReference type="PDB" id="1OWF">
    <property type="method" value="X-ray"/>
    <property type="resolution" value="1.95 A"/>
    <property type="chains" value="B=1-94"/>
</dbReference>
<dbReference type="PDB" id="1OWG">
    <property type="method" value="X-ray"/>
    <property type="resolution" value="2.10 A"/>
    <property type="chains" value="B=1-94"/>
</dbReference>
<dbReference type="PDB" id="2HT0">
    <property type="method" value="X-ray"/>
    <property type="resolution" value="2.00 A"/>
    <property type="chains" value="B=1-94"/>
</dbReference>
<dbReference type="PDB" id="2IIE">
    <property type="method" value="X-ray"/>
    <property type="resolution" value="2.41 A"/>
    <property type="chains" value="A=2-94"/>
</dbReference>
<dbReference type="PDB" id="2IIF">
    <property type="method" value="X-ray"/>
    <property type="resolution" value="2.72 A"/>
    <property type="chains" value="A=2-94"/>
</dbReference>
<dbReference type="PDB" id="5J0N">
    <property type="method" value="EM"/>
    <property type="resolution" value="11.00 A"/>
    <property type="chains" value="J/L=1-94"/>
</dbReference>
<dbReference type="PDB" id="5WFE">
    <property type="method" value="EM"/>
    <property type="resolution" value="3.64 A"/>
    <property type="chains" value="L=1-94"/>
</dbReference>
<dbReference type="PDBsum" id="1IHF"/>
<dbReference type="PDBsum" id="1OUZ"/>
<dbReference type="PDBsum" id="1OWF"/>
<dbReference type="PDBsum" id="1OWG"/>
<dbReference type="PDBsum" id="2HT0"/>
<dbReference type="PDBsum" id="2IIE"/>
<dbReference type="PDBsum" id="2IIF"/>
<dbReference type="PDBsum" id="5J0N"/>
<dbReference type="PDBsum" id="5WFE"/>
<dbReference type="SMR" id="P0A6Y1"/>
<dbReference type="BioGRID" id="4263061">
    <property type="interactions" value="313"/>
</dbReference>
<dbReference type="BioGRID" id="849907">
    <property type="interactions" value="1"/>
</dbReference>
<dbReference type="ComplexPortal" id="CPX-1957">
    <property type="entry name" value="Integration host factor complex"/>
</dbReference>
<dbReference type="DIP" id="DIP-41099N"/>
<dbReference type="FunCoup" id="P0A6Y1">
    <property type="interactions" value="356"/>
</dbReference>
<dbReference type="IntAct" id="P0A6Y1">
    <property type="interactions" value="34"/>
</dbReference>
<dbReference type="STRING" id="511145.b0912"/>
<dbReference type="jPOST" id="P0A6Y1"/>
<dbReference type="PaxDb" id="511145-b0912"/>
<dbReference type="EnsemblBacteria" id="AAC73998">
    <property type="protein sequence ID" value="AAC73998"/>
    <property type="gene ID" value="b0912"/>
</dbReference>
<dbReference type="GeneID" id="93776505"/>
<dbReference type="GeneID" id="945533"/>
<dbReference type="KEGG" id="ecj:JW0895"/>
<dbReference type="KEGG" id="eco:b0912"/>
<dbReference type="KEGG" id="ecoc:C3026_05620"/>
<dbReference type="PATRIC" id="fig|1411691.4.peg.1364"/>
<dbReference type="EchoBASE" id="EB0436"/>
<dbReference type="eggNOG" id="COG0776">
    <property type="taxonomic scope" value="Bacteria"/>
</dbReference>
<dbReference type="HOGENOM" id="CLU_105066_2_0_6"/>
<dbReference type="InParanoid" id="P0A6Y1"/>
<dbReference type="OMA" id="DQKSVPF"/>
<dbReference type="OrthoDB" id="9804203at2"/>
<dbReference type="PhylomeDB" id="P0A6Y1"/>
<dbReference type="BioCyc" id="EcoCyc:PD00348"/>
<dbReference type="EvolutionaryTrace" id="P0A6Y1"/>
<dbReference type="PRO" id="PR:P0A6Y1"/>
<dbReference type="Proteomes" id="UP000000625">
    <property type="component" value="Chromosome"/>
</dbReference>
<dbReference type="GO" id="GO:0005694">
    <property type="term" value="C:chromosome"/>
    <property type="evidence" value="ECO:0007669"/>
    <property type="project" value="InterPro"/>
</dbReference>
<dbReference type="GO" id="GO:0005829">
    <property type="term" value="C:cytosol"/>
    <property type="evidence" value="ECO:0000314"/>
    <property type="project" value="EcoCyc"/>
</dbReference>
<dbReference type="GO" id="GO:1990177">
    <property type="term" value="C:IHF-DNA complex"/>
    <property type="evidence" value="ECO:0000353"/>
    <property type="project" value="ComplexPortal"/>
</dbReference>
<dbReference type="GO" id="GO:0003677">
    <property type="term" value="F:DNA binding"/>
    <property type="evidence" value="ECO:0000318"/>
    <property type="project" value="GO_Central"/>
</dbReference>
<dbReference type="GO" id="GO:0030527">
    <property type="term" value="F:structural constituent of chromatin"/>
    <property type="evidence" value="ECO:0007669"/>
    <property type="project" value="InterPro"/>
</dbReference>
<dbReference type="GO" id="GO:0006310">
    <property type="term" value="P:DNA recombination"/>
    <property type="evidence" value="ECO:0007669"/>
    <property type="project" value="UniProtKB-UniRule"/>
</dbReference>
<dbReference type="GO" id="GO:0006260">
    <property type="term" value="P:DNA replication"/>
    <property type="evidence" value="ECO:0007669"/>
    <property type="project" value="UniProtKB-KW"/>
</dbReference>
<dbReference type="GO" id="GO:0006351">
    <property type="term" value="P:DNA-templated transcription"/>
    <property type="evidence" value="ECO:0000314"/>
    <property type="project" value="EcoCyc"/>
</dbReference>
<dbReference type="GO" id="GO:0006355">
    <property type="term" value="P:regulation of DNA-templated transcription"/>
    <property type="evidence" value="ECO:0007669"/>
    <property type="project" value="UniProtKB-UniRule"/>
</dbReference>
<dbReference type="GO" id="GO:0006417">
    <property type="term" value="P:regulation of translation"/>
    <property type="evidence" value="ECO:0000303"/>
    <property type="project" value="ComplexPortal"/>
</dbReference>
<dbReference type="CDD" id="cd13836">
    <property type="entry name" value="IHF_B"/>
    <property type="match status" value="1"/>
</dbReference>
<dbReference type="FunFam" id="4.10.520.10:FF:000003">
    <property type="entry name" value="Integration host factor subunit beta"/>
    <property type="match status" value="1"/>
</dbReference>
<dbReference type="Gene3D" id="4.10.520.10">
    <property type="entry name" value="IHF-like DNA-binding proteins"/>
    <property type="match status" value="1"/>
</dbReference>
<dbReference type="HAMAP" id="MF_00381">
    <property type="entry name" value="IHF_beta"/>
    <property type="match status" value="1"/>
</dbReference>
<dbReference type="InterPro" id="IPR000119">
    <property type="entry name" value="Hist_DNA-bd"/>
</dbReference>
<dbReference type="InterPro" id="IPR020816">
    <property type="entry name" value="Histone-like_DNA-bd_CS"/>
</dbReference>
<dbReference type="InterPro" id="IPR010992">
    <property type="entry name" value="IHF-like_DNA-bd_dom_sf"/>
</dbReference>
<dbReference type="InterPro" id="IPR005685">
    <property type="entry name" value="IHF_beta"/>
</dbReference>
<dbReference type="NCBIfam" id="TIGR00988">
    <property type="entry name" value="hip"/>
    <property type="match status" value="1"/>
</dbReference>
<dbReference type="NCBIfam" id="NF001222">
    <property type="entry name" value="PRK00199.1"/>
    <property type="match status" value="1"/>
</dbReference>
<dbReference type="PANTHER" id="PTHR33175">
    <property type="entry name" value="DNA-BINDING PROTEIN HU"/>
    <property type="match status" value="1"/>
</dbReference>
<dbReference type="PANTHER" id="PTHR33175:SF5">
    <property type="entry name" value="INTEGRATION HOST FACTOR SUBUNIT BETA"/>
    <property type="match status" value="1"/>
</dbReference>
<dbReference type="Pfam" id="PF00216">
    <property type="entry name" value="Bac_DNA_binding"/>
    <property type="match status" value="1"/>
</dbReference>
<dbReference type="PRINTS" id="PR01727">
    <property type="entry name" value="DNABINDINGHU"/>
</dbReference>
<dbReference type="SMART" id="SM00411">
    <property type="entry name" value="BHL"/>
    <property type="match status" value="1"/>
</dbReference>
<dbReference type="SUPFAM" id="SSF47729">
    <property type="entry name" value="IHF-like DNA-binding proteins"/>
    <property type="match status" value="1"/>
</dbReference>
<dbReference type="PROSITE" id="PS00045">
    <property type="entry name" value="HISTONE_LIKE"/>
    <property type="match status" value="1"/>
</dbReference>
<organism>
    <name type="scientific">Escherichia coli (strain K12)</name>
    <dbReference type="NCBI Taxonomy" id="83333"/>
    <lineage>
        <taxon>Bacteria</taxon>
        <taxon>Pseudomonadati</taxon>
        <taxon>Pseudomonadota</taxon>
        <taxon>Gammaproteobacteria</taxon>
        <taxon>Enterobacterales</taxon>
        <taxon>Enterobacteriaceae</taxon>
        <taxon>Escherichia</taxon>
    </lineage>
</organism>